<evidence type="ECO:0000250" key="1"/>
<evidence type="ECO:0000250" key="2">
    <source>
        <dbReference type="UniProtKB" id="P31151"/>
    </source>
</evidence>
<evidence type="ECO:0000255" key="3">
    <source>
        <dbReference type="PROSITE-ProRule" id="PRU00448"/>
    </source>
</evidence>
<evidence type="ECO:0000305" key="4"/>
<sequence length="101" mass="11544">MSSSQLEQAITDLINLFHKYSGSDDTIEKEDLLRLMKDNFPNFLGACEKRGRDYLSNIFEKQDKNKDRKIDFSEFLSLLADIATDYHNHSHGAQLCSGGNQ</sequence>
<organism>
    <name type="scientific">Bos taurus</name>
    <name type="common">Bovine</name>
    <dbReference type="NCBI Taxonomy" id="9913"/>
    <lineage>
        <taxon>Eukaryota</taxon>
        <taxon>Metazoa</taxon>
        <taxon>Chordata</taxon>
        <taxon>Craniata</taxon>
        <taxon>Vertebrata</taxon>
        <taxon>Euteleostomi</taxon>
        <taxon>Mammalia</taxon>
        <taxon>Eutheria</taxon>
        <taxon>Laurasiatheria</taxon>
        <taxon>Artiodactyla</taxon>
        <taxon>Ruminantia</taxon>
        <taxon>Pecora</taxon>
        <taxon>Bovidae</taxon>
        <taxon>Bovinae</taxon>
        <taxon>Bos</taxon>
    </lineage>
</organism>
<dbReference type="EMBL" id="L39834">
    <property type="protein sequence ID" value="AAA91101.1"/>
    <property type="molecule type" value="mRNA"/>
</dbReference>
<dbReference type="EMBL" id="D49550">
    <property type="protein sequence ID" value="BAA08498.1"/>
    <property type="molecule type" value="mRNA"/>
</dbReference>
<dbReference type="EMBL" id="BC142114">
    <property type="protein sequence ID" value="AAI42115.1"/>
    <property type="molecule type" value="mRNA"/>
</dbReference>
<dbReference type="RefSeq" id="NP_777021.1">
    <property type="nucleotide sequence ID" value="NM_174596.2"/>
</dbReference>
<dbReference type="RefSeq" id="XP_024840628.1">
    <property type="nucleotide sequence ID" value="XM_024984860.2"/>
</dbReference>
<dbReference type="RefSeq" id="XP_059737771.1">
    <property type="nucleotide sequence ID" value="XM_059881788.1"/>
</dbReference>
<dbReference type="SMR" id="Q28050"/>
<dbReference type="FunCoup" id="Q28050">
    <property type="interactions" value="88"/>
</dbReference>
<dbReference type="STRING" id="9913.ENSBTAP00000010838"/>
<dbReference type="Allergome" id="162">
    <property type="allergen name" value="Bos d 3"/>
</dbReference>
<dbReference type="Allergome" id="3164">
    <property type="allergen name" value="Bos d 3.0101"/>
</dbReference>
<dbReference type="PaxDb" id="9913-ENSBTAP00000010838"/>
<dbReference type="PeptideAtlas" id="Q28050"/>
<dbReference type="Ensembl" id="ENSBTAT00000010838.5">
    <property type="protein sequence ID" value="ENSBTAP00000010838.3"/>
    <property type="gene ID" value="ENSBTAG00000008238.5"/>
</dbReference>
<dbReference type="GeneID" id="282344"/>
<dbReference type="KEGG" id="bta:282344"/>
<dbReference type="CTD" id="6278"/>
<dbReference type="VEuPathDB" id="HostDB:ENSBTAG00000008238"/>
<dbReference type="eggNOG" id="ENOG502SZJ5">
    <property type="taxonomic scope" value="Eukaryota"/>
</dbReference>
<dbReference type="GeneTree" id="ENSGT00940000163629"/>
<dbReference type="HOGENOM" id="CLU_138624_5_0_1"/>
<dbReference type="InParanoid" id="Q28050"/>
<dbReference type="OMA" id="NTQARRF"/>
<dbReference type="OrthoDB" id="26525at2759"/>
<dbReference type="TreeFam" id="TF341148"/>
<dbReference type="Reactome" id="R-BTA-6798695">
    <property type="pathway name" value="Neutrophil degranulation"/>
</dbReference>
<dbReference type="Reactome" id="R-BTA-6799990">
    <property type="pathway name" value="Metal sequestration by antimicrobial proteins"/>
</dbReference>
<dbReference type="Proteomes" id="UP000009136">
    <property type="component" value="Chromosome 3"/>
</dbReference>
<dbReference type="Bgee" id="ENSBTAG00000008238">
    <property type="expression patterns" value="Expressed in zone of skin and 59 other cell types or tissues"/>
</dbReference>
<dbReference type="GO" id="GO:0005737">
    <property type="term" value="C:cytoplasm"/>
    <property type="evidence" value="ECO:0000318"/>
    <property type="project" value="GO_Central"/>
</dbReference>
<dbReference type="GO" id="GO:0005576">
    <property type="term" value="C:extracellular region"/>
    <property type="evidence" value="ECO:0007669"/>
    <property type="project" value="UniProtKB-SubCell"/>
</dbReference>
<dbReference type="GO" id="GO:0005509">
    <property type="term" value="F:calcium ion binding"/>
    <property type="evidence" value="ECO:0000318"/>
    <property type="project" value="GO_Central"/>
</dbReference>
<dbReference type="GO" id="GO:0048306">
    <property type="term" value="F:calcium-dependent protein binding"/>
    <property type="evidence" value="ECO:0000318"/>
    <property type="project" value="GO_Central"/>
</dbReference>
<dbReference type="GO" id="GO:0046914">
    <property type="term" value="F:transition metal ion binding"/>
    <property type="evidence" value="ECO:0007669"/>
    <property type="project" value="InterPro"/>
</dbReference>
<dbReference type="GO" id="GO:0043542">
    <property type="term" value="P:endothelial cell migration"/>
    <property type="evidence" value="ECO:0000318"/>
    <property type="project" value="GO_Central"/>
</dbReference>
<dbReference type="CDD" id="cd00213">
    <property type="entry name" value="S-100"/>
    <property type="match status" value="1"/>
</dbReference>
<dbReference type="Gene3D" id="1.10.238.10">
    <property type="entry name" value="EF-hand"/>
    <property type="match status" value="1"/>
</dbReference>
<dbReference type="InterPro" id="IPR011992">
    <property type="entry name" value="EF-hand-dom_pair"/>
</dbReference>
<dbReference type="InterPro" id="IPR018247">
    <property type="entry name" value="EF_Hand_1_Ca_BS"/>
</dbReference>
<dbReference type="InterPro" id="IPR002048">
    <property type="entry name" value="EF_hand_dom"/>
</dbReference>
<dbReference type="InterPro" id="IPR034325">
    <property type="entry name" value="S-100_dom"/>
</dbReference>
<dbReference type="InterPro" id="IPR001751">
    <property type="entry name" value="S100/CaBP7/8-like_CS"/>
</dbReference>
<dbReference type="InterPro" id="IPR013787">
    <property type="entry name" value="S100_Ca-bd_sub"/>
</dbReference>
<dbReference type="PANTHER" id="PTHR11639:SF67">
    <property type="entry name" value="PROTEIN S100-A7-LIKE 2"/>
    <property type="match status" value="1"/>
</dbReference>
<dbReference type="PANTHER" id="PTHR11639">
    <property type="entry name" value="S100 CALCIUM-BINDING PROTEIN"/>
    <property type="match status" value="1"/>
</dbReference>
<dbReference type="Pfam" id="PF00036">
    <property type="entry name" value="EF-hand_1"/>
    <property type="match status" value="1"/>
</dbReference>
<dbReference type="Pfam" id="PF01023">
    <property type="entry name" value="S_100"/>
    <property type="match status" value="1"/>
</dbReference>
<dbReference type="SMART" id="SM00054">
    <property type="entry name" value="EFh"/>
    <property type="match status" value="1"/>
</dbReference>
<dbReference type="SMART" id="SM01394">
    <property type="entry name" value="S_100"/>
    <property type="match status" value="1"/>
</dbReference>
<dbReference type="SUPFAM" id="SSF47473">
    <property type="entry name" value="EF-hand"/>
    <property type="match status" value="1"/>
</dbReference>
<dbReference type="PROSITE" id="PS00018">
    <property type="entry name" value="EF_HAND_1"/>
    <property type="match status" value="1"/>
</dbReference>
<dbReference type="PROSITE" id="PS50222">
    <property type="entry name" value="EF_HAND_2"/>
    <property type="match status" value="2"/>
</dbReference>
<dbReference type="PROSITE" id="PS00303">
    <property type="entry name" value="S100_CABP"/>
    <property type="match status" value="1"/>
</dbReference>
<protein>
    <recommendedName>
        <fullName>Protein S100-A7</fullName>
    </recommendedName>
    <alternativeName>
        <fullName>Calcium-binding protein in amniotic fluid 2</fullName>
        <shortName>CAAF2</shortName>
    </alternativeName>
    <alternativeName>
        <fullName>Dander minor allergen BDA11</fullName>
    </alternativeName>
    <alternativeName>
        <fullName>Dermal allergen BDA11</fullName>
    </alternativeName>
    <alternativeName>
        <fullName>S100 calcium-binding protein A7</fullName>
    </alternativeName>
    <allergenName>Bos d 3</allergenName>
</protein>
<comment type="subunit">
    <text evidence="1">Interacts with RANBP9.</text>
</comment>
<comment type="subcellular location">
    <subcellularLocation>
        <location evidence="1">Cytoplasm</location>
    </subcellularLocation>
    <subcellularLocation>
        <location evidence="1">Secreted</location>
    </subcellularLocation>
    <text evidence="1">Secreted by a non-classical secretory pathway.</text>
</comment>
<comment type="allergen">
    <text>Causes an allergic reaction in human. Minor allergen of bovine dander.</text>
</comment>
<comment type="similarity">
    <text evidence="4">Belongs to the S-100 family.</text>
</comment>
<accession>Q28050</accession>
<accession>A5PJH5</accession>
<feature type="initiator methionine" description="Removed" evidence="2">
    <location>
        <position position="1"/>
    </location>
</feature>
<feature type="chain" id="PRO_0000143989" description="Protein S100-A7">
    <location>
        <begin position="2"/>
        <end position="101"/>
    </location>
</feature>
<feature type="domain" description="EF-hand 1" evidence="3">
    <location>
        <begin position="8"/>
        <end position="42"/>
    </location>
</feature>
<feature type="domain" description="EF-hand 2" evidence="3">
    <location>
        <begin position="50"/>
        <end position="85"/>
    </location>
</feature>
<feature type="binding site" evidence="1">
    <location>
        <position position="18"/>
    </location>
    <ligand>
        <name>Zn(2+)</name>
        <dbReference type="ChEBI" id="CHEBI:29105"/>
    </ligand>
</feature>
<feature type="binding site" evidence="1">
    <location>
        <position position="25"/>
    </location>
    <ligand>
        <name>Zn(2+)</name>
        <dbReference type="ChEBI" id="CHEBI:29105"/>
    </ligand>
</feature>
<feature type="binding site" evidence="3">
    <location>
        <position position="63"/>
    </location>
    <ligand>
        <name>Ca(2+)</name>
        <dbReference type="ChEBI" id="CHEBI:29108"/>
        <note>high affinity</note>
    </ligand>
</feature>
<feature type="binding site" evidence="3">
    <location>
        <position position="65"/>
    </location>
    <ligand>
        <name>Ca(2+)</name>
        <dbReference type="ChEBI" id="CHEBI:29108"/>
        <note>high affinity</note>
    </ligand>
</feature>
<feature type="binding site" evidence="3">
    <location>
        <position position="67"/>
    </location>
    <ligand>
        <name>Ca(2+)</name>
        <dbReference type="ChEBI" id="CHEBI:29108"/>
        <note>high affinity</note>
    </ligand>
</feature>
<feature type="binding site" evidence="3">
    <location>
        <position position="69"/>
    </location>
    <ligand>
        <name>Ca(2+)</name>
        <dbReference type="ChEBI" id="CHEBI:29108"/>
        <note>high affinity</note>
    </ligand>
</feature>
<feature type="binding site" evidence="3">
    <location>
        <position position="74"/>
    </location>
    <ligand>
        <name>Ca(2+)</name>
        <dbReference type="ChEBI" id="CHEBI:29108"/>
        <note>high affinity</note>
    </ligand>
</feature>
<feature type="binding site" evidence="1">
    <location>
        <position position="87"/>
    </location>
    <ligand>
        <name>Zn(2+)</name>
        <dbReference type="ChEBI" id="CHEBI:29105"/>
    </ligand>
</feature>
<feature type="binding site" evidence="1">
    <location>
        <position position="91"/>
    </location>
    <ligand>
        <name>Zn(2+)</name>
        <dbReference type="ChEBI" id="CHEBI:29105"/>
    </ligand>
</feature>
<feature type="modified residue" description="N-acetylserine" evidence="2">
    <location>
        <position position="2"/>
    </location>
</feature>
<feature type="sequence conflict" description="In Ref. 1; AA sequence." evidence="4" ref="1">
    <original>D</original>
    <variation>E</variation>
    <location>
        <position position="38"/>
    </location>
</feature>
<name>S10A7_BOVIN</name>
<gene>
    <name type="primary">S100A7</name>
    <name type="synonym">CAAF2</name>
</gene>
<proteinExistence type="evidence at protein level"/>
<reference key="1">
    <citation type="journal article" date="1995" name="J. Invest. Dermatol.">
        <title>cDNA cloning and protein analysis of a bovine dermal allergen with homology to psoriasin.</title>
        <authorList>
            <person name="Rautiainen J."/>
            <person name="Rytkoenen M."/>
            <person name="Parkkinen S."/>
            <person name="Pentikaeinen J."/>
            <person name="Linnala-Kankkunen A."/>
            <person name="Virtanen T."/>
            <person name="Pelkonen J."/>
            <person name="Maentyjaervi R."/>
        </authorList>
    </citation>
    <scope>NUCLEOTIDE SEQUENCE [MRNA]</scope>
    <scope>PROTEIN SEQUENCE OF 20-33; 38-49 AND 70-101</scope>
    <source>
        <tissue>Skin</tissue>
    </source>
</reference>
<reference key="2">
    <citation type="journal article" date="1996" name="Biochem. Biophys. Res. Commun.">
        <title>Characterization of a new calcium-binding protein abundant in amniotic fluid, CAAF2, which is produced by fetal epidermal keratinocytes during embryogenesis.</title>
        <authorList>
            <person name="Hitomi J."/>
            <person name="Maruyama K."/>
            <person name="Kikuchi Y."/>
            <person name="Nagasaki K."/>
            <person name="Yamaguchi K."/>
        </authorList>
    </citation>
    <scope>NUCLEOTIDE SEQUENCE [MRNA]</scope>
    <source>
        <tissue>Skin</tissue>
    </source>
</reference>
<reference key="3">
    <citation type="submission" date="2007-06" db="EMBL/GenBank/DDBJ databases">
        <authorList>
            <consortium name="NIH - Mammalian Gene Collection (MGC) project"/>
        </authorList>
    </citation>
    <scope>NUCLEOTIDE SEQUENCE [LARGE SCALE MRNA]</scope>
    <source>
        <strain>Hereford</strain>
        <tissue>Thymus</tissue>
    </source>
</reference>
<keyword id="KW-0007">Acetylation</keyword>
<keyword id="KW-0020">Allergen</keyword>
<keyword id="KW-0106">Calcium</keyword>
<keyword id="KW-0963">Cytoplasm</keyword>
<keyword id="KW-0903">Direct protein sequencing</keyword>
<keyword id="KW-0479">Metal-binding</keyword>
<keyword id="KW-1185">Reference proteome</keyword>
<keyword id="KW-0677">Repeat</keyword>
<keyword id="KW-0964">Secreted</keyword>
<keyword id="KW-0862">Zinc</keyword>